<organism>
    <name type="scientific">Petunia hybrida</name>
    <name type="common">Petunia</name>
    <dbReference type="NCBI Taxonomy" id="4102"/>
    <lineage>
        <taxon>Eukaryota</taxon>
        <taxon>Viridiplantae</taxon>
        <taxon>Streptophyta</taxon>
        <taxon>Embryophyta</taxon>
        <taxon>Tracheophyta</taxon>
        <taxon>Spermatophyta</taxon>
        <taxon>Magnoliopsida</taxon>
        <taxon>eudicotyledons</taxon>
        <taxon>Gunneridae</taxon>
        <taxon>Pentapetalae</taxon>
        <taxon>asterids</taxon>
        <taxon>lamiids</taxon>
        <taxon>Solanales</taxon>
        <taxon>Solanaceae</taxon>
        <taxon>Petunioideae</taxon>
        <taxon>Petunia</taxon>
    </lineage>
</organism>
<evidence type="ECO:0000255" key="1">
    <source>
        <dbReference type="PROSITE-ProRule" id="PRU00251"/>
    </source>
</evidence>
<evidence type="ECO:0000255" key="2">
    <source>
        <dbReference type="PROSITE-ProRule" id="PRU00629"/>
    </source>
</evidence>
<sequence>MGRGKIEIKRIENSSNRQVTYSKRRNGIIKKAKEITVLCDAKVSLIIFGNSGKMHEYCSPSTTLPDMLDGYQKTSGRRLWDAKHENLSNEIDRIKKENDNMQVKLRHLKGEDINSLNHKELMVLEEGLTNGLSSISAKQSEILRMVRKNDQILEEEHKQLQYALHQKEMAAMGGNMRMIEEVYHQRDRDYEYQQMPFALRVQPMQPNLHERM</sequence>
<accession>Q07474</accession>
<gene>
    <name type="primary">PMADS2</name>
</gene>
<keyword id="KW-0010">Activator</keyword>
<keyword id="KW-0217">Developmental protein</keyword>
<keyword id="KW-0238">DNA-binding</keyword>
<keyword id="KW-0539">Nucleus</keyword>
<keyword id="KW-0804">Transcription</keyword>
<keyword id="KW-0805">Transcription regulation</keyword>
<comment type="function">
    <text>Transcription factor involved in the genetic control of flower development.</text>
</comment>
<comment type="subcellular location">
    <subcellularLocation>
        <location>Nucleus</location>
    </subcellularLocation>
</comment>
<comment type="tissue specificity">
    <text>Predominantly expressed in petals and stamens, less in carpels and sepals.</text>
</comment>
<protein>
    <recommendedName>
        <fullName>Floral homeotic protein PMADS 2</fullName>
    </recommendedName>
</protein>
<dbReference type="EMBL" id="X69947">
    <property type="protein sequence ID" value="CAA49568.1"/>
    <property type="molecule type" value="mRNA"/>
</dbReference>
<dbReference type="PIR" id="S31707">
    <property type="entry name" value="S31707"/>
</dbReference>
<dbReference type="SMR" id="Q07474"/>
<dbReference type="IntAct" id="Q07474">
    <property type="interactions" value="1"/>
</dbReference>
<dbReference type="GO" id="GO:0005634">
    <property type="term" value="C:nucleus"/>
    <property type="evidence" value="ECO:0007669"/>
    <property type="project" value="UniProtKB-SubCell"/>
</dbReference>
<dbReference type="GO" id="GO:0003700">
    <property type="term" value="F:DNA-binding transcription factor activity"/>
    <property type="evidence" value="ECO:0007669"/>
    <property type="project" value="InterPro"/>
</dbReference>
<dbReference type="GO" id="GO:0046983">
    <property type="term" value="F:protein dimerization activity"/>
    <property type="evidence" value="ECO:0007669"/>
    <property type="project" value="InterPro"/>
</dbReference>
<dbReference type="GO" id="GO:0000977">
    <property type="term" value="F:RNA polymerase II transcription regulatory region sequence-specific DNA binding"/>
    <property type="evidence" value="ECO:0007669"/>
    <property type="project" value="InterPro"/>
</dbReference>
<dbReference type="GO" id="GO:0045944">
    <property type="term" value="P:positive regulation of transcription by RNA polymerase II"/>
    <property type="evidence" value="ECO:0007669"/>
    <property type="project" value="InterPro"/>
</dbReference>
<dbReference type="CDD" id="cd00265">
    <property type="entry name" value="MADS_MEF2_like"/>
    <property type="match status" value="1"/>
</dbReference>
<dbReference type="Gene3D" id="3.40.1810.10">
    <property type="entry name" value="Transcription factor, MADS-box"/>
    <property type="match status" value="1"/>
</dbReference>
<dbReference type="InterPro" id="IPR050142">
    <property type="entry name" value="MADS-box/MEF2_TF"/>
</dbReference>
<dbReference type="InterPro" id="IPR033896">
    <property type="entry name" value="MEF2-like_N"/>
</dbReference>
<dbReference type="InterPro" id="IPR002487">
    <property type="entry name" value="TF_Kbox"/>
</dbReference>
<dbReference type="InterPro" id="IPR002100">
    <property type="entry name" value="TF_MADSbox"/>
</dbReference>
<dbReference type="InterPro" id="IPR036879">
    <property type="entry name" value="TF_MADSbox_sf"/>
</dbReference>
<dbReference type="PANTHER" id="PTHR48019">
    <property type="entry name" value="SERUM RESPONSE FACTOR HOMOLOG"/>
    <property type="match status" value="1"/>
</dbReference>
<dbReference type="Pfam" id="PF01486">
    <property type="entry name" value="K-box"/>
    <property type="match status" value="1"/>
</dbReference>
<dbReference type="Pfam" id="PF00319">
    <property type="entry name" value="SRF-TF"/>
    <property type="match status" value="1"/>
</dbReference>
<dbReference type="PRINTS" id="PR00404">
    <property type="entry name" value="MADSDOMAIN"/>
</dbReference>
<dbReference type="SMART" id="SM00432">
    <property type="entry name" value="MADS"/>
    <property type="match status" value="1"/>
</dbReference>
<dbReference type="SUPFAM" id="SSF55455">
    <property type="entry name" value="SRF-like"/>
    <property type="match status" value="1"/>
</dbReference>
<dbReference type="PROSITE" id="PS51297">
    <property type="entry name" value="K_BOX"/>
    <property type="match status" value="1"/>
</dbReference>
<dbReference type="PROSITE" id="PS00350">
    <property type="entry name" value="MADS_BOX_1"/>
    <property type="match status" value="1"/>
</dbReference>
<dbReference type="PROSITE" id="PS50066">
    <property type="entry name" value="MADS_BOX_2"/>
    <property type="match status" value="1"/>
</dbReference>
<name>MADS2_PETHY</name>
<proteinExistence type="evidence at transcript level"/>
<reference key="1">
    <citation type="journal article" date="1993" name="Plant Physiol.">
        <title>The cDNA sequence of two MADS box proteins in Petunia.</title>
        <authorList>
            <person name="Kush A."/>
            <person name="Brunelle A."/>
            <person name="Shevell D."/>
            <person name="Chua N.-H."/>
        </authorList>
    </citation>
    <scope>NUCLEOTIDE SEQUENCE [MRNA]</scope>
    <source>
        <tissue>Petal</tissue>
    </source>
</reference>
<feature type="chain" id="PRO_0000199491" description="Floral homeotic protein PMADS 2">
    <location>
        <begin position="1"/>
        <end position="212"/>
    </location>
</feature>
<feature type="domain" description="MADS-box" evidence="1">
    <location>
        <begin position="3"/>
        <end position="58"/>
    </location>
</feature>
<feature type="domain" description="K-box" evidence="2">
    <location>
        <begin position="84"/>
        <end position="170"/>
    </location>
</feature>